<proteinExistence type="inferred from homology"/>
<comment type="function">
    <text evidence="1">Required for maturation of 30S ribosomal subunits.</text>
</comment>
<comment type="subcellular location">
    <subcellularLocation>
        <location evidence="1">Cytoplasm</location>
    </subcellularLocation>
</comment>
<comment type="similarity">
    <text evidence="1">Belongs to the RimP family.</text>
</comment>
<sequence length="150" mass="16651">MSTLEQKLTEMITAPVEALGFELVGIEFIRGRTSTLRIYIDSEDGINVDDCADVSHQVSAVLDVEDPITVAYNLEVSSPGLDRPLFTAEHYARFVGEEVTLVLRMAVQNRRKWQGVIKAVDGEMITVTVEGKDEVFALSNIQKANLVPHF</sequence>
<accession>B7NDF6</accession>
<gene>
    <name evidence="1" type="primary">rimP</name>
    <name type="ordered locus">ECUMN_3652</name>
</gene>
<dbReference type="EMBL" id="CU928163">
    <property type="protein sequence ID" value="CAR14806.1"/>
    <property type="molecule type" value="Genomic_DNA"/>
</dbReference>
<dbReference type="RefSeq" id="WP_001300397.1">
    <property type="nucleotide sequence ID" value="NC_011751.1"/>
</dbReference>
<dbReference type="RefSeq" id="YP_002414311.1">
    <property type="nucleotide sequence ID" value="NC_011751.1"/>
</dbReference>
<dbReference type="SMR" id="B7NDF6"/>
<dbReference type="STRING" id="585056.ECUMN_3652"/>
<dbReference type="GeneID" id="93778813"/>
<dbReference type="KEGG" id="eum:ECUMN_3652"/>
<dbReference type="PATRIC" id="fig|585056.7.peg.3832"/>
<dbReference type="HOGENOM" id="CLU_070525_1_1_6"/>
<dbReference type="Proteomes" id="UP000007097">
    <property type="component" value="Chromosome"/>
</dbReference>
<dbReference type="GO" id="GO:0005829">
    <property type="term" value="C:cytosol"/>
    <property type="evidence" value="ECO:0007669"/>
    <property type="project" value="TreeGrafter"/>
</dbReference>
<dbReference type="GO" id="GO:0000028">
    <property type="term" value="P:ribosomal small subunit assembly"/>
    <property type="evidence" value="ECO:0007669"/>
    <property type="project" value="TreeGrafter"/>
</dbReference>
<dbReference type="GO" id="GO:0006412">
    <property type="term" value="P:translation"/>
    <property type="evidence" value="ECO:0007669"/>
    <property type="project" value="TreeGrafter"/>
</dbReference>
<dbReference type="CDD" id="cd01734">
    <property type="entry name" value="YlxS_C"/>
    <property type="match status" value="1"/>
</dbReference>
<dbReference type="FunFam" id="2.30.30.180:FF:000001">
    <property type="entry name" value="Ribosome maturation factor RimP"/>
    <property type="match status" value="1"/>
</dbReference>
<dbReference type="FunFam" id="3.30.300.70:FF:000001">
    <property type="entry name" value="Ribosome maturation factor RimP"/>
    <property type="match status" value="1"/>
</dbReference>
<dbReference type="Gene3D" id="2.30.30.180">
    <property type="entry name" value="Ribosome maturation factor RimP, C-terminal domain"/>
    <property type="match status" value="1"/>
</dbReference>
<dbReference type="Gene3D" id="3.30.300.70">
    <property type="entry name" value="RimP-like superfamily, N-terminal"/>
    <property type="match status" value="1"/>
</dbReference>
<dbReference type="HAMAP" id="MF_01077">
    <property type="entry name" value="RimP"/>
    <property type="match status" value="1"/>
</dbReference>
<dbReference type="InterPro" id="IPR003728">
    <property type="entry name" value="Ribosome_maturation_RimP"/>
</dbReference>
<dbReference type="InterPro" id="IPR028998">
    <property type="entry name" value="RimP_C"/>
</dbReference>
<dbReference type="InterPro" id="IPR036847">
    <property type="entry name" value="RimP_C_sf"/>
</dbReference>
<dbReference type="InterPro" id="IPR028989">
    <property type="entry name" value="RimP_N"/>
</dbReference>
<dbReference type="InterPro" id="IPR035956">
    <property type="entry name" value="RimP_N_sf"/>
</dbReference>
<dbReference type="NCBIfam" id="NF000927">
    <property type="entry name" value="PRK00092.1-1"/>
    <property type="match status" value="1"/>
</dbReference>
<dbReference type="PANTHER" id="PTHR33867">
    <property type="entry name" value="RIBOSOME MATURATION FACTOR RIMP"/>
    <property type="match status" value="1"/>
</dbReference>
<dbReference type="PANTHER" id="PTHR33867:SF1">
    <property type="entry name" value="RIBOSOME MATURATION FACTOR RIMP"/>
    <property type="match status" value="1"/>
</dbReference>
<dbReference type="Pfam" id="PF17384">
    <property type="entry name" value="DUF150_C"/>
    <property type="match status" value="1"/>
</dbReference>
<dbReference type="Pfam" id="PF02576">
    <property type="entry name" value="RimP_N"/>
    <property type="match status" value="1"/>
</dbReference>
<dbReference type="SUPFAM" id="SSF74942">
    <property type="entry name" value="YhbC-like, C-terminal domain"/>
    <property type="match status" value="1"/>
</dbReference>
<dbReference type="SUPFAM" id="SSF75420">
    <property type="entry name" value="YhbC-like, N-terminal domain"/>
    <property type="match status" value="1"/>
</dbReference>
<feature type="chain" id="PRO_0000384659" description="Ribosome maturation factor RimP">
    <location>
        <begin position="1"/>
        <end position="150"/>
    </location>
</feature>
<protein>
    <recommendedName>
        <fullName evidence="1">Ribosome maturation factor RimP</fullName>
    </recommendedName>
</protein>
<reference key="1">
    <citation type="journal article" date="2009" name="PLoS Genet.">
        <title>Organised genome dynamics in the Escherichia coli species results in highly diverse adaptive paths.</title>
        <authorList>
            <person name="Touchon M."/>
            <person name="Hoede C."/>
            <person name="Tenaillon O."/>
            <person name="Barbe V."/>
            <person name="Baeriswyl S."/>
            <person name="Bidet P."/>
            <person name="Bingen E."/>
            <person name="Bonacorsi S."/>
            <person name="Bouchier C."/>
            <person name="Bouvet O."/>
            <person name="Calteau A."/>
            <person name="Chiapello H."/>
            <person name="Clermont O."/>
            <person name="Cruveiller S."/>
            <person name="Danchin A."/>
            <person name="Diard M."/>
            <person name="Dossat C."/>
            <person name="Karoui M.E."/>
            <person name="Frapy E."/>
            <person name="Garry L."/>
            <person name="Ghigo J.M."/>
            <person name="Gilles A.M."/>
            <person name="Johnson J."/>
            <person name="Le Bouguenec C."/>
            <person name="Lescat M."/>
            <person name="Mangenot S."/>
            <person name="Martinez-Jehanne V."/>
            <person name="Matic I."/>
            <person name="Nassif X."/>
            <person name="Oztas S."/>
            <person name="Petit M.A."/>
            <person name="Pichon C."/>
            <person name="Rouy Z."/>
            <person name="Ruf C.S."/>
            <person name="Schneider D."/>
            <person name="Tourret J."/>
            <person name="Vacherie B."/>
            <person name="Vallenet D."/>
            <person name="Medigue C."/>
            <person name="Rocha E.P.C."/>
            <person name="Denamur E."/>
        </authorList>
    </citation>
    <scope>NUCLEOTIDE SEQUENCE [LARGE SCALE GENOMIC DNA]</scope>
    <source>
        <strain>UMN026 / ExPEC</strain>
    </source>
</reference>
<evidence type="ECO:0000255" key="1">
    <source>
        <dbReference type="HAMAP-Rule" id="MF_01077"/>
    </source>
</evidence>
<keyword id="KW-0963">Cytoplasm</keyword>
<keyword id="KW-0690">Ribosome biogenesis</keyword>
<name>RIMP_ECOLU</name>
<organism>
    <name type="scientific">Escherichia coli O17:K52:H18 (strain UMN026 / ExPEC)</name>
    <dbReference type="NCBI Taxonomy" id="585056"/>
    <lineage>
        <taxon>Bacteria</taxon>
        <taxon>Pseudomonadati</taxon>
        <taxon>Pseudomonadota</taxon>
        <taxon>Gammaproteobacteria</taxon>
        <taxon>Enterobacterales</taxon>
        <taxon>Enterobacteriaceae</taxon>
        <taxon>Escherichia</taxon>
    </lineage>
</organism>